<proteinExistence type="evidence at transcript level"/>
<sequence>MGKFMKPGKVVLVLAGRYSGRKAVIVKNIDDGTSDRPYSHALVAGIDRYPRKVTAAMGKKKIAKRSKIKSFVKVYNYNHLMPTRYSVDIPLDKTVVNKDVFRDPALKRKARREAKVKFEEKYKTGKNKWFFQKLRF</sequence>
<comment type="function">
    <text evidence="1 2">Component of the large ribosomal subunit (By similarity). Required for proper rRNA processing and maturation of 28S and 5.8S rRNAs (By similarity).</text>
</comment>
<comment type="subunit">
    <text evidence="1 2">Component of the large ribosomal subunit (By similarity). Interacts with RRP1B (By similarity). Component of the large ribosomal subunit. Interacts with RRP1B. Interacts with DHX33 (By similarity).</text>
</comment>
<comment type="subcellular location">
    <subcellularLocation>
        <location evidence="2">Cytoplasm</location>
        <location evidence="2">Cytosol</location>
    </subcellularLocation>
    <subcellularLocation>
        <location evidence="2">Cytoplasm</location>
    </subcellularLocation>
    <subcellularLocation>
        <location evidence="1">Rough endoplasmic reticulum</location>
    </subcellularLocation>
    <text evidence="1 2">Detected on cytosolic polysomes (By similarity). Detected in ribosomes that are associated with the rough endoplasmic reticulum (By similarity).</text>
</comment>
<comment type="similarity">
    <text evidence="3">Belongs to the eukaryotic ribosomal protein eL27 family.</text>
</comment>
<comment type="sequence caution" evidence="3">
    <conflict type="erroneous initiation">
        <sequence resource="EMBL-CDS" id="CAB46818"/>
    </conflict>
</comment>
<feature type="chain" id="PRO_0000126075" description="Large ribosomal subunit protein eL27">
    <location>
        <begin position="1"/>
        <end position="136"/>
    </location>
</feature>
<feature type="domain" description="KOW">
    <location>
        <begin position="5"/>
        <end position="40"/>
    </location>
</feature>
<feature type="modified residue" description="N6-acetyllysine" evidence="2">
    <location>
        <position position="27"/>
    </location>
</feature>
<feature type="modified residue" description="N6-acetyllysine" evidence="2">
    <location>
        <position position="93"/>
    </location>
</feature>
<evidence type="ECO:0000250" key="1">
    <source>
        <dbReference type="UniProtKB" id="A1XQU5"/>
    </source>
</evidence>
<evidence type="ECO:0000250" key="2">
    <source>
        <dbReference type="UniProtKB" id="P61353"/>
    </source>
</evidence>
<evidence type="ECO:0000305" key="3"/>
<dbReference type="EMBL" id="AJ388516">
    <property type="protein sequence ID" value="CAB46818.1"/>
    <property type="status" value="ALT_INIT"/>
    <property type="molecule type" value="mRNA"/>
</dbReference>
<dbReference type="RefSeq" id="NP_001003102.2">
    <property type="nucleotide sequence ID" value="NM_001003102.2"/>
</dbReference>
<dbReference type="SMR" id="Q9XSU7"/>
<dbReference type="FunCoup" id="Q9XSU7">
    <property type="interactions" value="2018"/>
</dbReference>
<dbReference type="STRING" id="9615.ENSCAFP00000021561"/>
<dbReference type="PaxDb" id="9612-ENSCAFP00000021561"/>
<dbReference type="GeneID" id="403688"/>
<dbReference type="KEGG" id="cfa:403688"/>
<dbReference type="CTD" id="6155"/>
<dbReference type="eggNOG" id="KOG3418">
    <property type="taxonomic scope" value="Eukaryota"/>
</dbReference>
<dbReference type="InParanoid" id="Q9XSU7"/>
<dbReference type="OrthoDB" id="2365484at2759"/>
<dbReference type="Proteomes" id="UP000002254">
    <property type="component" value="Unplaced"/>
</dbReference>
<dbReference type="Proteomes" id="UP000694429">
    <property type="component" value="Unplaced"/>
</dbReference>
<dbReference type="Proteomes" id="UP000694542">
    <property type="component" value="Unplaced"/>
</dbReference>
<dbReference type="Proteomes" id="UP000805418">
    <property type="component" value="Unplaced"/>
</dbReference>
<dbReference type="GO" id="GO:0098556">
    <property type="term" value="C:cytoplasmic side of rough endoplasmic reticulum membrane"/>
    <property type="evidence" value="ECO:0000250"/>
    <property type="project" value="UniProtKB"/>
</dbReference>
<dbReference type="GO" id="GO:0022625">
    <property type="term" value="C:cytosolic large ribosomal subunit"/>
    <property type="evidence" value="ECO:0000318"/>
    <property type="project" value="GO_Central"/>
</dbReference>
<dbReference type="GO" id="GO:0015934">
    <property type="term" value="C:large ribosomal subunit"/>
    <property type="evidence" value="ECO:0000250"/>
    <property type="project" value="UniProtKB"/>
</dbReference>
<dbReference type="GO" id="GO:0003735">
    <property type="term" value="F:structural constituent of ribosome"/>
    <property type="evidence" value="ECO:0000318"/>
    <property type="project" value="GO_Central"/>
</dbReference>
<dbReference type="GO" id="GO:0006364">
    <property type="term" value="P:rRNA processing"/>
    <property type="evidence" value="ECO:0000250"/>
    <property type="project" value="UniProtKB"/>
</dbReference>
<dbReference type="GO" id="GO:0006412">
    <property type="term" value="P:translation"/>
    <property type="evidence" value="ECO:0007669"/>
    <property type="project" value="InterPro"/>
</dbReference>
<dbReference type="CDD" id="cd06090">
    <property type="entry name" value="KOW_RPL27"/>
    <property type="match status" value="1"/>
</dbReference>
<dbReference type="FunFam" id="2.30.30.770:FF:000001">
    <property type="entry name" value="60S ribosomal protein L27"/>
    <property type="match status" value="1"/>
</dbReference>
<dbReference type="Gene3D" id="2.30.30.770">
    <property type="match status" value="1"/>
</dbReference>
<dbReference type="InterPro" id="IPR005824">
    <property type="entry name" value="KOW"/>
</dbReference>
<dbReference type="InterPro" id="IPR001141">
    <property type="entry name" value="Ribosomal_eL27"/>
</dbReference>
<dbReference type="InterPro" id="IPR018262">
    <property type="entry name" value="Ribosomal_eL27_CS"/>
</dbReference>
<dbReference type="InterPro" id="IPR041991">
    <property type="entry name" value="Ribosomal_eL27_KOW"/>
</dbReference>
<dbReference type="InterPro" id="IPR038655">
    <property type="entry name" value="Ribosomal_eL27_sf"/>
</dbReference>
<dbReference type="InterPro" id="IPR008991">
    <property type="entry name" value="Translation_prot_SH3-like_sf"/>
</dbReference>
<dbReference type="PANTHER" id="PTHR10497">
    <property type="entry name" value="60S RIBOSOMAL PROTEIN L27"/>
    <property type="match status" value="1"/>
</dbReference>
<dbReference type="Pfam" id="PF00467">
    <property type="entry name" value="KOW"/>
    <property type="match status" value="1"/>
</dbReference>
<dbReference type="Pfam" id="PF01777">
    <property type="entry name" value="Ribosomal_L27e"/>
    <property type="match status" value="1"/>
</dbReference>
<dbReference type="SMART" id="SM00739">
    <property type="entry name" value="KOW"/>
    <property type="match status" value="1"/>
</dbReference>
<dbReference type="SUPFAM" id="SSF50104">
    <property type="entry name" value="Translation proteins SH3-like domain"/>
    <property type="match status" value="1"/>
</dbReference>
<dbReference type="PROSITE" id="PS01107">
    <property type="entry name" value="RIBOSOMAL_L27E"/>
    <property type="match status" value="1"/>
</dbReference>
<protein>
    <recommendedName>
        <fullName evidence="3">Large ribosomal subunit protein eL27</fullName>
    </recommendedName>
    <alternativeName>
        <fullName>60S ribosomal protein L27</fullName>
    </alternativeName>
</protein>
<gene>
    <name type="primary">RPL27</name>
    <name type="ORF">B173</name>
</gene>
<accession>Q9XSU7</accession>
<keyword id="KW-0007">Acetylation</keyword>
<keyword id="KW-0963">Cytoplasm</keyword>
<keyword id="KW-0256">Endoplasmic reticulum</keyword>
<keyword id="KW-1185">Reference proteome</keyword>
<keyword id="KW-0687">Ribonucleoprotein</keyword>
<keyword id="KW-0689">Ribosomal protein</keyword>
<name>RL27_CANLF</name>
<reference key="1">
    <citation type="journal article" date="2000" name="Anal. Biochem.">
        <title>A method for the large-scale cloning of nuclear proteins and nuclear targeting sequences on a functional basis.</title>
        <authorList>
            <person name="Pichon B."/>
            <person name="Mercan D."/>
            <person name="Pouillon V."/>
            <person name="Christophe-Hobertus C."/>
            <person name="Christophe D."/>
        </authorList>
    </citation>
    <scope>NUCLEOTIDE SEQUENCE [LARGE SCALE MRNA]</scope>
    <source>
        <tissue>Thyroid</tissue>
    </source>
</reference>
<organism>
    <name type="scientific">Canis lupus familiaris</name>
    <name type="common">Dog</name>
    <name type="synonym">Canis familiaris</name>
    <dbReference type="NCBI Taxonomy" id="9615"/>
    <lineage>
        <taxon>Eukaryota</taxon>
        <taxon>Metazoa</taxon>
        <taxon>Chordata</taxon>
        <taxon>Craniata</taxon>
        <taxon>Vertebrata</taxon>
        <taxon>Euteleostomi</taxon>
        <taxon>Mammalia</taxon>
        <taxon>Eutheria</taxon>
        <taxon>Laurasiatheria</taxon>
        <taxon>Carnivora</taxon>
        <taxon>Caniformia</taxon>
        <taxon>Canidae</taxon>
        <taxon>Canis</taxon>
    </lineage>
</organism>